<dbReference type="EMBL" id="CU928164">
    <property type="protein sequence ID" value="CAR19816.1"/>
    <property type="molecule type" value="Genomic_DNA"/>
</dbReference>
<dbReference type="RefSeq" id="WP_000243741.1">
    <property type="nucleotide sequence ID" value="NC_011750.1"/>
</dbReference>
<dbReference type="RefSeq" id="YP_002409603.1">
    <property type="nucleotide sequence ID" value="NC_011750.1"/>
</dbReference>
<dbReference type="SMR" id="B7NKS2"/>
<dbReference type="STRING" id="585057.ECIAI39_3700"/>
<dbReference type="GeneID" id="93778776"/>
<dbReference type="KEGG" id="ect:ECIAI39_3700"/>
<dbReference type="PATRIC" id="fig|585057.6.peg.3833"/>
<dbReference type="HOGENOM" id="CLU_059558_1_1_6"/>
<dbReference type="Proteomes" id="UP000000749">
    <property type="component" value="Chromosome"/>
</dbReference>
<dbReference type="GO" id="GO:0005524">
    <property type="term" value="F:ATP binding"/>
    <property type="evidence" value="ECO:0007669"/>
    <property type="project" value="UniProtKB-UniRule"/>
</dbReference>
<dbReference type="GO" id="GO:0005525">
    <property type="term" value="F:GTP binding"/>
    <property type="evidence" value="ECO:0007669"/>
    <property type="project" value="UniProtKB-UniRule"/>
</dbReference>
<dbReference type="GO" id="GO:0003723">
    <property type="term" value="F:RNA binding"/>
    <property type="evidence" value="ECO:0007669"/>
    <property type="project" value="UniProtKB-KW"/>
</dbReference>
<dbReference type="Gene3D" id="3.40.50.300">
    <property type="entry name" value="P-loop containing nucleotide triphosphate hydrolases"/>
    <property type="match status" value="1"/>
</dbReference>
<dbReference type="HAMAP" id="MF_00636">
    <property type="entry name" value="RapZ_like"/>
    <property type="match status" value="1"/>
</dbReference>
<dbReference type="InterPro" id="IPR027417">
    <property type="entry name" value="P-loop_NTPase"/>
</dbReference>
<dbReference type="InterPro" id="IPR005337">
    <property type="entry name" value="RapZ-like"/>
</dbReference>
<dbReference type="InterPro" id="IPR053930">
    <property type="entry name" value="RapZ-like_N"/>
</dbReference>
<dbReference type="InterPro" id="IPR053931">
    <property type="entry name" value="RapZ_C"/>
</dbReference>
<dbReference type="NCBIfam" id="NF003828">
    <property type="entry name" value="PRK05416.1"/>
    <property type="match status" value="1"/>
</dbReference>
<dbReference type="PANTHER" id="PTHR30448">
    <property type="entry name" value="RNASE ADAPTER PROTEIN RAPZ"/>
    <property type="match status" value="1"/>
</dbReference>
<dbReference type="PANTHER" id="PTHR30448:SF0">
    <property type="entry name" value="RNASE ADAPTER PROTEIN RAPZ"/>
    <property type="match status" value="1"/>
</dbReference>
<dbReference type="Pfam" id="PF22740">
    <property type="entry name" value="PapZ_C"/>
    <property type="match status" value="1"/>
</dbReference>
<dbReference type="Pfam" id="PF03668">
    <property type="entry name" value="RapZ-like_N"/>
    <property type="match status" value="1"/>
</dbReference>
<dbReference type="PIRSF" id="PIRSF005052">
    <property type="entry name" value="P-loopkin"/>
    <property type="match status" value="1"/>
</dbReference>
<dbReference type="SUPFAM" id="SSF52540">
    <property type="entry name" value="P-loop containing nucleoside triphosphate hydrolases"/>
    <property type="match status" value="1"/>
</dbReference>
<sequence>MVLMIVSGRSGSGKSVALRALEDMGFYCVDNLPVVLLPDLARTLADREISAAVSIDVRNMPESPEIFEQAMSNLPDAFSPQLLFLDADRNTLIRRYSDTRRLHPLSSKNLSLESAIDKESDLLEPLRSRADLIVDTSEMSVHELAEMLRTRLLGKRERELTMVFESFGFKHGIPIDADYVFDVRFLPNPHWDPKLRPMTGLDKPVAAFLDRHTEVHNFIYQTRSYLELWLPMLETNNRSYLTVAIGCTGGKHRSVYIAEQLADYFRSRGKNVQSRHRTLEKRKP</sequence>
<proteinExistence type="inferred from homology"/>
<evidence type="ECO:0000255" key="1">
    <source>
        <dbReference type="HAMAP-Rule" id="MF_00636"/>
    </source>
</evidence>
<gene>
    <name evidence="1" type="primary">rapZ</name>
    <name type="ordered locus">ECIAI39_3700</name>
</gene>
<keyword id="KW-0067">ATP-binding</keyword>
<keyword id="KW-0342">GTP-binding</keyword>
<keyword id="KW-0547">Nucleotide-binding</keyword>
<keyword id="KW-0694">RNA-binding</keyword>
<feature type="chain" id="PRO_1000130750" description="RNase adapter protein RapZ">
    <location>
        <begin position="1"/>
        <end position="284"/>
    </location>
</feature>
<feature type="region of interest" description="RNA-binding" evidence="1">
    <location>
        <begin position="266"/>
        <end position="284"/>
    </location>
</feature>
<feature type="binding site" evidence="1">
    <location>
        <begin position="8"/>
        <end position="15"/>
    </location>
    <ligand>
        <name>ATP</name>
        <dbReference type="ChEBI" id="CHEBI:30616"/>
    </ligand>
</feature>
<feature type="binding site" evidence="1">
    <location>
        <begin position="56"/>
        <end position="59"/>
    </location>
    <ligand>
        <name>GTP</name>
        <dbReference type="ChEBI" id="CHEBI:37565"/>
    </ligand>
</feature>
<name>RAPZ_ECO7I</name>
<accession>B7NKS2</accession>
<comment type="function">
    <text evidence="1">Modulates the synthesis of GlmS, by affecting the processing and stability of the regulatory small RNA GlmZ. When glucosamine-6-phosphate (GlcN6P) concentrations are high in the cell, RapZ binds GlmZ and targets it to cleavage by RNase E. Consequently, GlmZ is inactivated and unable to activate GlmS synthesis. Under low GlcN6P concentrations, RapZ is sequestered and inactivated by an other regulatory small RNA, GlmY, preventing GlmZ degradation and leading to synthesis of GlmS.</text>
</comment>
<comment type="subunit">
    <text evidence="1">Homotrimer.</text>
</comment>
<comment type="similarity">
    <text evidence="1">Belongs to the RapZ-like family. RapZ subfamily.</text>
</comment>
<organism>
    <name type="scientific">Escherichia coli O7:K1 (strain IAI39 / ExPEC)</name>
    <dbReference type="NCBI Taxonomy" id="585057"/>
    <lineage>
        <taxon>Bacteria</taxon>
        <taxon>Pseudomonadati</taxon>
        <taxon>Pseudomonadota</taxon>
        <taxon>Gammaproteobacteria</taxon>
        <taxon>Enterobacterales</taxon>
        <taxon>Enterobacteriaceae</taxon>
        <taxon>Escherichia</taxon>
    </lineage>
</organism>
<protein>
    <recommendedName>
        <fullName evidence="1">RNase adapter protein RapZ</fullName>
    </recommendedName>
</protein>
<reference key="1">
    <citation type="journal article" date="2009" name="PLoS Genet.">
        <title>Organised genome dynamics in the Escherichia coli species results in highly diverse adaptive paths.</title>
        <authorList>
            <person name="Touchon M."/>
            <person name="Hoede C."/>
            <person name="Tenaillon O."/>
            <person name="Barbe V."/>
            <person name="Baeriswyl S."/>
            <person name="Bidet P."/>
            <person name="Bingen E."/>
            <person name="Bonacorsi S."/>
            <person name="Bouchier C."/>
            <person name="Bouvet O."/>
            <person name="Calteau A."/>
            <person name="Chiapello H."/>
            <person name="Clermont O."/>
            <person name="Cruveiller S."/>
            <person name="Danchin A."/>
            <person name="Diard M."/>
            <person name="Dossat C."/>
            <person name="Karoui M.E."/>
            <person name="Frapy E."/>
            <person name="Garry L."/>
            <person name="Ghigo J.M."/>
            <person name="Gilles A.M."/>
            <person name="Johnson J."/>
            <person name="Le Bouguenec C."/>
            <person name="Lescat M."/>
            <person name="Mangenot S."/>
            <person name="Martinez-Jehanne V."/>
            <person name="Matic I."/>
            <person name="Nassif X."/>
            <person name="Oztas S."/>
            <person name="Petit M.A."/>
            <person name="Pichon C."/>
            <person name="Rouy Z."/>
            <person name="Ruf C.S."/>
            <person name="Schneider D."/>
            <person name="Tourret J."/>
            <person name="Vacherie B."/>
            <person name="Vallenet D."/>
            <person name="Medigue C."/>
            <person name="Rocha E.P.C."/>
            <person name="Denamur E."/>
        </authorList>
    </citation>
    <scope>NUCLEOTIDE SEQUENCE [LARGE SCALE GENOMIC DNA]</scope>
    <source>
        <strain>IAI39 / ExPEC</strain>
    </source>
</reference>